<name>RUTD_ECOKI</name>
<keyword id="KW-0378">Hydrolase</keyword>
<evidence type="ECO:0000255" key="1">
    <source>
        <dbReference type="HAMAP-Rule" id="MF_00832"/>
    </source>
</evidence>
<sequence>MKLSLSPPPYADAPVVVLISGLGGSGSYWLPQLAVLVQEYQVVCYDQRGTGNNPDTLAEDYSIAQMAAELHQALVAAGIERYAVVGHALGALVGMQLALDYPASVTVLVSVNGWLRINAHTRRCFQVREQLLHSGGAQAWVEAQPLFLYPADWMAARAPRLEAEDALALAHFQGKNNLLRRLNALKRADFSHHADRIRCPVQIICASDDLLVPTACSSELHAALPDSQKMVMRYGGHACNVTDPETFNALLLNGLASLLHHREAAL</sequence>
<feature type="chain" id="PRO_0000402955" description="Putative carbamate hydrolase RutD">
    <location>
        <begin position="1"/>
        <end position="266"/>
    </location>
</feature>
<comment type="function">
    <text evidence="1">Involved in pyrimidine catabolism. May facilitate the hydrolysis of carbamate, a reaction that can also occur spontaneously.</text>
</comment>
<comment type="catalytic activity">
    <reaction evidence="1">
        <text>carbamate + 2 H(+) = NH4(+) + CO2</text>
        <dbReference type="Rhea" id="RHEA:15649"/>
        <dbReference type="ChEBI" id="CHEBI:13941"/>
        <dbReference type="ChEBI" id="CHEBI:15378"/>
        <dbReference type="ChEBI" id="CHEBI:16526"/>
        <dbReference type="ChEBI" id="CHEBI:28938"/>
    </reaction>
</comment>
<comment type="similarity">
    <text evidence="1">Belongs to the AB hydrolase superfamily. Hydrolase RutD family.</text>
</comment>
<gene>
    <name evidence="1" type="primary">rutD</name>
    <name type="ordered locus">ECOK1_1061</name>
</gene>
<proteinExistence type="inferred from homology"/>
<reference key="1">
    <citation type="journal article" date="2010" name="Proc. Natl. Acad. Sci. U.S.A.">
        <title>Identification of protective and broadly conserved vaccine antigens from the genome of extraintestinal pathogenic Escherichia coli.</title>
        <authorList>
            <person name="Moriel D.G."/>
            <person name="Bertoldi I."/>
            <person name="Spagnuolo A."/>
            <person name="Marchi S."/>
            <person name="Rosini R."/>
            <person name="Nesta B."/>
            <person name="Pastorello I."/>
            <person name="Corea V.A."/>
            <person name="Torricelli G."/>
            <person name="Cartocci E."/>
            <person name="Savino S."/>
            <person name="Scarselli M."/>
            <person name="Dobrindt U."/>
            <person name="Hacker J."/>
            <person name="Tettelin H."/>
            <person name="Tallon L.J."/>
            <person name="Sullivan S."/>
            <person name="Wieler L.H."/>
            <person name="Ewers C."/>
            <person name="Pickard D."/>
            <person name="Dougan G."/>
            <person name="Fontana M.R."/>
            <person name="Rappuoli R."/>
            <person name="Pizza M."/>
            <person name="Serino L."/>
        </authorList>
    </citation>
    <scope>NUCLEOTIDE SEQUENCE [LARGE SCALE GENOMIC DNA]</scope>
    <source>
        <strain>IHE3034 / ExPEC</strain>
    </source>
</reference>
<organism>
    <name type="scientific">Escherichia coli O18:K1:H7 (strain IHE3034 / ExPEC)</name>
    <dbReference type="NCBI Taxonomy" id="714962"/>
    <lineage>
        <taxon>Bacteria</taxon>
        <taxon>Pseudomonadati</taxon>
        <taxon>Pseudomonadota</taxon>
        <taxon>Gammaproteobacteria</taxon>
        <taxon>Enterobacterales</taxon>
        <taxon>Enterobacteriaceae</taxon>
        <taxon>Escherichia</taxon>
    </lineage>
</organism>
<dbReference type="EC" id="3.5.1.-" evidence="1"/>
<dbReference type="EMBL" id="CP001969">
    <property type="protein sequence ID" value="ADE91095.1"/>
    <property type="molecule type" value="Genomic_DNA"/>
</dbReference>
<dbReference type="RefSeq" id="WP_001331944.1">
    <property type="nucleotide sequence ID" value="NC_017628.1"/>
</dbReference>
<dbReference type="SMR" id="D5CZG9"/>
<dbReference type="ESTHER" id="ecoli-rutD">
    <property type="family name" value="RutD"/>
</dbReference>
<dbReference type="KEGG" id="eih:ECOK1_1061"/>
<dbReference type="PATRIC" id="fig|714962.3.peg.1075"/>
<dbReference type="HOGENOM" id="CLU_020336_50_1_6"/>
<dbReference type="GO" id="GO:0016020">
    <property type="term" value="C:membrane"/>
    <property type="evidence" value="ECO:0007669"/>
    <property type="project" value="TreeGrafter"/>
</dbReference>
<dbReference type="GO" id="GO:0016811">
    <property type="term" value="F:hydrolase activity, acting on carbon-nitrogen (but not peptide) bonds, in linear amides"/>
    <property type="evidence" value="ECO:0007669"/>
    <property type="project" value="InterPro"/>
</dbReference>
<dbReference type="GO" id="GO:0019740">
    <property type="term" value="P:nitrogen utilization"/>
    <property type="evidence" value="ECO:0007669"/>
    <property type="project" value="UniProtKB-UniRule"/>
</dbReference>
<dbReference type="GO" id="GO:0006212">
    <property type="term" value="P:uracil catabolic process"/>
    <property type="evidence" value="ECO:0007669"/>
    <property type="project" value="UniProtKB-UniRule"/>
</dbReference>
<dbReference type="FunFam" id="3.40.50.1820:FF:000052">
    <property type="entry name" value="Putative aminoacrylate hydrolase RutD"/>
    <property type="match status" value="1"/>
</dbReference>
<dbReference type="Gene3D" id="3.40.50.1820">
    <property type="entry name" value="alpha/beta hydrolase"/>
    <property type="match status" value="1"/>
</dbReference>
<dbReference type="HAMAP" id="MF_00832">
    <property type="entry name" value="RutD"/>
    <property type="match status" value="1"/>
</dbReference>
<dbReference type="InterPro" id="IPR000073">
    <property type="entry name" value="AB_hydrolase_1"/>
</dbReference>
<dbReference type="InterPro" id="IPR029058">
    <property type="entry name" value="AB_hydrolase_fold"/>
</dbReference>
<dbReference type="InterPro" id="IPR050266">
    <property type="entry name" value="AB_hydrolase_sf"/>
</dbReference>
<dbReference type="InterPro" id="IPR019913">
    <property type="entry name" value="Pyrimidine_utilisation_RutD"/>
</dbReference>
<dbReference type="NCBIfam" id="TIGR03611">
    <property type="entry name" value="RutD"/>
    <property type="match status" value="1"/>
</dbReference>
<dbReference type="PANTHER" id="PTHR43798:SF27">
    <property type="entry name" value="HYDROLASE ALPHA_BETA HYDROLASE FOLD FAMILY"/>
    <property type="match status" value="1"/>
</dbReference>
<dbReference type="PANTHER" id="PTHR43798">
    <property type="entry name" value="MONOACYLGLYCEROL LIPASE"/>
    <property type="match status" value="1"/>
</dbReference>
<dbReference type="Pfam" id="PF00561">
    <property type="entry name" value="Abhydrolase_1"/>
    <property type="match status" value="1"/>
</dbReference>
<dbReference type="PRINTS" id="PR00111">
    <property type="entry name" value="ABHYDROLASE"/>
</dbReference>
<dbReference type="SUPFAM" id="SSF53474">
    <property type="entry name" value="alpha/beta-Hydrolases"/>
    <property type="match status" value="1"/>
</dbReference>
<protein>
    <recommendedName>
        <fullName evidence="1">Putative carbamate hydrolase RutD</fullName>
        <ecNumber evidence="1">3.5.1.-</ecNumber>
    </recommendedName>
    <alternativeName>
        <fullName evidence="1">Aminohydrolase</fullName>
    </alternativeName>
</protein>
<accession>D5CZG9</accession>